<protein>
    <recommendedName>
        <fullName evidence="1">Thiosulfate sulfurtransferase GlpE</fullName>
        <ecNumber evidence="1">2.8.1.1</ecNumber>
    </recommendedName>
</protein>
<organism>
    <name type="scientific">Stutzerimonas stutzeri (strain A1501)</name>
    <name type="common">Pseudomonas stutzeri</name>
    <dbReference type="NCBI Taxonomy" id="379731"/>
    <lineage>
        <taxon>Bacteria</taxon>
        <taxon>Pseudomonadati</taxon>
        <taxon>Pseudomonadota</taxon>
        <taxon>Gammaproteobacteria</taxon>
        <taxon>Pseudomonadales</taxon>
        <taxon>Pseudomonadaceae</taxon>
        <taxon>Stutzerimonas</taxon>
    </lineage>
</organism>
<reference key="1">
    <citation type="journal article" date="2008" name="Proc. Natl. Acad. Sci. U.S.A.">
        <title>Nitrogen fixation island and rhizosphere competence traits in the genome of root-associated Pseudomonas stutzeri A1501.</title>
        <authorList>
            <person name="Yan Y."/>
            <person name="Yang J."/>
            <person name="Dou Y."/>
            <person name="Chen M."/>
            <person name="Ping S."/>
            <person name="Peng J."/>
            <person name="Lu W."/>
            <person name="Zhang W."/>
            <person name="Yao Z."/>
            <person name="Li H."/>
            <person name="Liu W."/>
            <person name="He S."/>
            <person name="Geng L."/>
            <person name="Zhang X."/>
            <person name="Yang F."/>
            <person name="Yu H."/>
            <person name="Zhan Y."/>
            <person name="Li D."/>
            <person name="Lin Z."/>
            <person name="Wang Y."/>
            <person name="Elmerich C."/>
            <person name="Lin M."/>
            <person name="Jin Q."/>
        </authorList>
    </citation>
    <scope>NUCLEOTIDE SEQUENCE [LARGE SCALE GENOMIC DNA]</scope>
    <source>
        <strain>A1501</strain>
    </source>
</reference>
<gene>
    <name evidence="1" type="primary">glpE</name>
    <name type="ordered locus">PST_0723</name>
</gene>
<keyword id="KW-0963">Cytoplasm</keyword>
<keyword id="KW-1185">Reference proteome</keyword>
<keyword id="KW-0808">Transferase</keyword>
<feature type="chain" id="PRO_0000319443" description="Thiosulfate sulfurtransferase GlpE">
    <location>
        <begin position="1"/>
        <end position="109"/>
    </location>
</feature>
<feature type="domain" description="Rhodanese" evidence="1">
    <location>
        <begin position="16"/>
        <end position="104"/>
    </location>
</feature>
<feature type="active site" description="Cysteine persulfide intermediate" evidence="1">
    <location>
        <position position="64"/>
    </location>
</feature>
<sequence length="109" mass="12136">MTDFKRIPPEQAHAMRNAGAVIVDIRDPHSFANGHISGSRHLDNHSLPDFIAAADLDHPLIVTCYHGHSSQSAAAYLVNQGFSEVYSLDGGFELWRHTYPSDVEHDEQQ</sequence>
<proteinExistence type="inferred from homology"/>
<name>GLPE_STUS1</name>
<comment type="function">
    <text evidence="1">Transferase that catalyzes the transfer of sulfur from thiosulfate to thiophilic acceptors such as cyanide or dithiols. May function in a CysM-independent thiosulfate assimilation pathway by catalyzing the conversion of thiosulfate to sulfite, which can then be used for L-cysteine biosynthesis.</text>
</comment>
<comment type="catalytic activity">
    <reaction evidence="1">
        <text>thiosulfate + hydrogen cyanide = thiocyanate + sulfite + 2 H(+)</text>
        <dbReference type="Rhea" id="RHEA:16881"/>
        <dbReference type="ChEBI" id="CHEBI:15378"/>
        <dbReference type="ChEBI" id="CHEBI:17359"/>
        <dbReference type="ChEBI" id="CHEBI:18022"/>
        <dbReference type="ChEBI" id="CHEBI:18407"/>
        <dbReference type="ChEBI" id="CHEBI:33542"/>
        <dbReference type="EC" id="2.8.1.1"/>
    </reaction>
</comment>
<comment type="catalytic activity">
    <reaction evidence="1">
        <text>thiosulfate + [thioredoxin]-dithiol = [thioredoxin]-disulfide + hydrogen sulfide + sulfite + 2 H(+)</text>
        <dbReference type="Rhea" id="RHEA:83859"/>
        <dbReference type="Rhea" id="RHEA-COMP:10698"/>
        <dbReference type="Rhea" id="RHEA-COMP:10700"/>
        <dbReference type="ChEBI" id="CHEBI:15378"/>
        <dbReference type="ChEBI" id="CHEBI:17359"/>
        <dbReference type="ChEBI" id="CHEBI:29919"/>
        <dbReference type="ChEBI" id="CHEBI:29950"/>
        <dbReference type="ChEBI" id="CHEBI:33542"/>
        <dbReference type="ChEBI" id="CHEBI:50058"/>
    </reaction>
</comment>
<comment type="subcellular location">
    <subcellularLocation>
        <location evidence="1">Cytoplasm</location>
    </subcellularLocation>
</comment>
<comment type="similarity">
    <text evidence="1">Belongs to the GlpE family.</text>
</comment>
<accession>A4VHH7</accession>
<dbReference type="EC" id="2.8.1.1" evidence="1"/>
<dbReference type="EMBL" id="CP000304">
    <property type="protein sequence ID" value="ABP78428.1"/>
    <property type="molecule type" value="Genomic_DNA"/>
</dbReference>
<dbReference type="RefSeq" id="WP_011911935.1">
    <property type="nucleotide sequence ID" value="NC_009434.1"/>
</dbReference>
<dbReference type="SMR" id="A4VHH7"/>
<dbReference type="GeneID" id="66819863"/>
<dbReference type="KEGG" id="psa:PST_0723"/>
<dbReference type="eggNOG" id="COG0607">
    <property type="taxonomic scope" value="Bacteria"/>
</dbReference>
<dbReference type="HOGENOM" id="CLU_089574_14_0_6"/>
<dbReference type="Proteomes" id="UP000000233">
    <property type="component" value="Chromosome"/>
</dbReference>
<dbReference type="GO" id="GO:0005737">
    <property type="term" value="C:cytoplasm"/>
    <property type="evidence" value="ECO:0007669"/>
    <property type="project" value="UniProtKB-SubCell"/>
</dbReference>
<dbReference type="GO" id="GO:0004792">
    <property type="term" value="F:thiosulfate-cyanide sulfurtransferase activity"/>
    <property type="evidence" value="ECO:0007669"/>
    <property type="project" value="UniProtKB-UniRule"/>
</dbReference>
<dbReference type="GO" id="GO:0006071">
    <property type="term" value="P:glycerol metabolic process"/>
    <property type="evidence" value="ECO:0007669"/>
    <property type="project" value="UniProtKB-UniRule"/>
</dbReference>
<dbReference type="CDD" id="cd01444">
    <property type="entry name" value="GlpE_ST"/>
    <property type="match status" value="1"/>
</dbReference>
<dbReference type="Gene3D" id="3.40.250.10">
    <property type="entry name" value="Rhodanese-like domain"/>
    <property type="match status" value="1"/>
</dbReference>
<dbReference type="HAMAP" id="MF_01009">
    <property type="entry name" value="Thiosulf_sulfurtr"/>
    <property type="match status" value="1"/>
</dbReference>
<dbReference type="InterPro" id="IPR050229">
    <property type="entry name" value="GlpE_sulfurtransferase"/>
</dbReference>
<dbReference type="InterPro" id="IPR001763">
    <property type="entry name" value="Rhodanese-like_dom"/>
</dbReference>
<dbReference type="InterPro" id="IPR036873">
    <property type="entry name" value="Rhodanese-like_dom_sf"/>
</dbReference>
<dbReference type="InterPro" id="IPR023695">
    <property type="entry name" value="Thiosulf_sulfurTrfase"/>
</dbReference>
<dbReference type="NCBIfam" id="NF001195">
    <property type="entry name" value="PRK00162.1"/>
    <property type="match status" value="1"/>
</dbReference>
<dbReference type="PANTHER" id="PTHR43031">
    <property type="entry name" value="FAD-DEPENDENT OXIDOREDUCTASE"/>
    <property type="match status" value="1"/>
</dbReference>
<dbReference type="PANTHER" id="PTHR43031:SF6">
    <property type="entry name" value="THIOSULFATE SULFURTRANSFERASE GLPE"/>
    <property type="match status" value="1"/>
</dbReference>
<dbReference type="Pfam" id="PF00581">
    <property type="entry name" value="Rhodanese"/>
    <property type="match status" value="1"/>
</dbReference>
<dbReference type="SMART" id="SM00450">
    <property type="entry name" value="RHOD"/>
    <property type="match status" value="1"/>
</dbReference>
<dbReference type="SUPFAM" id="SSF52821">
    <property type="entry name" value="Rhodanese/Cell cycle control phosphatase"/>
    <property type="match status" value="1"/>
</dbReference>
<dbReference type="PROSITE" id="PS50206">
    <property type="entry name" value="RHODANESE_3"/>
    <property type="match status" value="1"/>
</dbReference>
<evidence type="ECO:0000255" key="1">
    <source>
        <dbReference type="HAMAP-Rule" id="MF_01009"/>
    </source>
</evidence>